<proteinExistence type="inferred from homology"/>
<name>MLTC_YERE8</name>
<gene>
    <name evidence="1" type="primary">mltC</name>
    <name type="ordered locus">YE3445</name>
</gene>
<dbReference type="EC" id="4.2.2.n1" evidence="1"/>
<dbReference type="EMBL" id="AM286415">
    <property type="protein sequence ID" value="CAL13469.1"/>
    <property type="status" value="ALT_INIT"/>
    <property type="molecule type" value="Genomic_DNA"/>
</dbReference>
<dbReference type="RefSeq" id="WP_005157159.1">
    <property type="nucleotide sequence ID" value="NC_008800.1"/>
</dbReference>
<dbReference type="RefSeq" id="YP_001007611.1">
    <property type="nucleotide sequence ID" value="NC_008800.1"/>
</dbReference>
<dbReference type="SMR" id="A1JPV7"/>
<dbReference type="CAZy" id="GH23">
    <property type="family name" value="Glycoside Hydrolase Family 23"/>
</dbReference>
<dbReference type="GeneID" id="93972910"/>
<dbReference type="KEGG" id="yen:YE3445"/>
<dbReference type="PATRIC" id="fig|393305.7.peg.3659"/>
<dbReference type="eggNOG" id="COG0741">
    <property type="taxonomic scope" value="Bacteria"/>
</dbReference>
<dbReference type="HOGENOM" id="CLU_044583_0_0_6"/>
<dbReference type="OrthoDB" id="5620293at2"/>
<dbReference type="Proteomes" id="UP000000642">
    <property type="component" value="Chromosome"/>
</dbReference>
<dbReference type="GO" id="GO:0009279">
    <property type="term" value="C:cell outer membrane"/>
    <property type="evidence" value="ECO:0007669"/>
    <property type="project" value="UniProtKB-SubCell"/>
</dbReference>
<dbReference type="GO" id="GO:0016798">
    <property type="term" value="F:hydrolase activity, acting on glycosyl bonds"/>
    <property type="evidence" value="ECO:0007669"/>
    <property type="project" value="InterPro"/>
</dbReference>
<dbReference type="GO" id="GO:0008933">
    <property type="term" value="F:peptidoglycan lytic transglycosylase activity"/>
    <property type="evidence" value="ECO:0007669"/>
    <property type="project" value="UniProtKB-UniRule"/>
</dbReference>
<dbReference type="GO" id="GO:0016998">
    <property type="term" value="P:cell wall macromolecule catabolic process"/>
    <property type="evidence" value="ECO:0007669"/>
    <property type="project" value="UniProtKB-UniRule"/>
</dbReference>
<dbReference type="GO" id="GO:0071555">
    <property type="term" value="P:cell wall organization"/>
    <property type="evidence" value="ECO:0007669"/>
    <property type="project" value="UniProtKB-KW"/>
</dbReference>
<dbReference type="GO" id="GO:0000270">
    <property type="term" value="P:peptidoglycan metabolic process"/>
    <property type="evidence" value="ECO:0007669"/>
    <property type="project" value="InterPro"/>
</dbReference>
<dbReference type="CDD" id="cd16893">
    <property type="entry name" value="LT_MltC_MltE"/>
    <property type="match status" value="1"/>
</dbReference>
<dbReference type="FunFam" id="1.10.530.10:FF:000002">
    <property type="entry name" value="Membrane-bound lytic murein transglycosylase C"/>
    <property type="match status" value="1"/>
</dbReference>
<dbReference type="Gene3D" id="1.10.530.10">
    <property type="match status" value="1"/>
</dbReference>
<dbReference type="HAMAP" id="MF_01616">
    <property type="entry name" value="MltC"/>
    <property type="match status" value="1"/>
</dbReference>
<dbReference type="InterPro" id="IPR023346">
    <property type="entry name" value="Lysozyme-like_dom_sf"/>
</dbReference>
<dbReference type="InterPro" id="IPR023664">
    <property type="entry name" value="Murein_transglycosylaseC"/>
</dbReference>
<dbReference type="InterPro" id="IPR024570">
    <property type="entry name" value="Murein_transglycosylaseC_N"/>
</dbReference>
<dbReference type="InterPro" id="IPR000189">
    <property type="entry name" value="Transglyc_AS"/>
</dbReference>
<dbReference type="InterPro" id="IPR008258">
    <property type="entry name" value="Transglycosylase_SLT_dom_1"/>
</dbReference>
<dbReference type="NCBIfam" id="NF008670">
    <property type="entry name" value="PRK11671.1"/>
    <property type="match status" value="1"/>
</dbReference>
<dbReference type="PANTHER" id="PTHR37423:SF2">
    <property type="entry name" value="MEMBRANE-BOUND LYTIC MUREIN TRANSGLYCOSYLASE C"/>
    <property type="match status" value="1"/>
</dbReference>
<dbReference type="PANTHER" id="PTHR37423">
    <property type="entry name" value="SOLUBLE LYTIC MUREIN TRANSGLYCOSYLASE-RELATED"/>
    <property type="match status" value="1"/>
</dbReference>
<dbReference type="Pfam" id="PF11873">
    <property type="entry name" value="Mltc_N"/>
    <property type="match status" value="1"/>
</dbReference>
<dbReference type="Pfam" id="PF01464">
    <property type="entry name" value="SLT"/>
    <property type="match status" value="1"/>
</dbReference>
<dbReference type="SUPFAM" id="SSF53955">
    <property type="entry name" value="Lysozyme-like"/>
    <property type="match status" value="1"/>
</dbReference>
<dbReference type="PROSITE" id="PS51257">
    <property type="entry name" value="PROKAR_LIPOPROTEIN"/>
    <property type="match status" value="1"/>
</dbReference>
<dbReference type="PROSITE" id="PS00922">
    <property type="entry name" value="TRANSGLYCOSYLASE"/>
    <property type="match status" value="1"/>
</dbReference>
<accession>A1JPV7</accession>
<sequence>MKKILALLVIAPLLVSCSGNKNQADNEAFIKDTNGFEILMGQFAHNIENIWGLKEVLIAGPKDYVKYTDQYQTRSHINFDAGTITVETIATTDPAAHLRQAIITTLLMGDDPGSIDLYSDANDIQISKEPFLYGQVLDNNGEPIRWEWRAAHFADYLLQNKMQKRTSGLHVIWSVTLQLVPNHLDKRAHKYLPLVRQSAEKYGVEESLILAIMQTESSFNPYAVSGSDALGLMQVVQHTAGRDVFKMKGKSGQPSRSYLFDPANNIDAGTAYLSILQNTYLGGIQNATSRRYAVITSYNGGAGSVLRVFSSDKNQAVNIINNMAPGDVFQTLTTKHPSGESRRYLVKVNSAQKSYRRH</sequence>
<reference key="1">
    <citation type="journal article" date="2006" name="PLoS Genet.">
        <title>The complete genome sequence and comparative genome analysis of the high pathogenicity Yersinia enterocolitica strain 8081.</title>
        <authorList>
            <person name="Thomson N.R."/>
            <person name="Howard S."/>
            <person name="Wren B.W."/>
            <person name="Holden M.T.G."/>
            <person name="Crossman L."/>
            <person name="Challis G.L."/>
            <person name="Churcher C."/>
            <person name="Mungall K."/>
            <person name="Brooks K."/>
            <person name="Chillingworth T."/>
            <person name="Feltwell T."/>
            <person name="Abdellah Z."/>
            <person name="Hauser H."/>
            <person name="Jagels K."/>
            <person name="Maddison M."/>
            <person name="Moule S."/>
            <person name="Sanders M."/>
            <person name="Whitehead S."/>
            <person name="Quail M.A."/>
            <person name="Dougan G."/>
            <person name="Parkhill J."/>
            <person name="Prentice M.B."/>
        </authorList>
    </citation>
    <scope>NUCLEOTIDE SEQUENCE [LARGE SCALE GENOMIC DNA]</scope>
    <source>
        <strain>NCTC 13174 / 8081</strain>
    </source>
</reference>
<feature type="signal peptide" evidence="1">
    <location>
        <begin position="1"/>
        <end position="16"/>
    </location>
</feature>
<feature type="chain" id="PRO_0000323521" description="Membrane-bound lytic murein transglycosylase C">
    <location>
        <begin position="17"/>
        <end position="358"/>
    </location>
</feature>
<feature type="lipid moiety-binding region" description="N-palmitoyl cysteine" evidence="1">
    <location>
        <position position="17"/>
    </location>
</feature>
<feature type="lipid moiety-binding region" description="S-diacylglycerol cysteine" evidence="1">
    <location>
        <position position="17"/>
    </location>
</feature>
<protein>
    <recommendedName>
        <fullName evidence="1">Membrane-bound lytic murein transglycosylase C</fullName>
        <ecNumber evidence="1">4.2.2.n1</ecNumber>
    </recommendedName>
    <alternativeName>
        <fullName evidence="1">Murein lyase C</fullName>
    </alternativeName>
</protein>
<organism>
    <name type="scientific">Yersinia enterocolitica serotype O:8 / biotype 1B (strain NCTC 13174 / 8081)</name>
    <dbReference type="NCBI Taxonomy" id="393305"/>
    <lineage>
        <taxon>Bacteria</taxon>
        <taxon>Pseudomonadati</taxon>
        <taxon>Pseudomonadota</taxon>
        <taxon>Gammaproteobacteria</taxon>
        <taxon>Enterobacterales</taxon>
        <taxon>Yersiniaceae</taxon>
        <taxon>Yersinia</taxon>
    </lineage>
</organism>
<comment type="function">
    <text evidence="1">Murein-degrading enzyme. May play a role in recycling of muropeptides during cell elongation and/or cell division.</text>
</comment>
<comment type="catalytic activity">
    <reaction evidence="1">
        <text>Exolytic cleavage of the (1-&gt;4)-beta-glycosidic linkage between N-acetylmuramic acid (MurNAc) and N-acetylglucosamine (GlcNAc) residues in peptidoglycan, from either the reducing or the non-reducing ends of the peptidoglycan chains, with concomitant formation of a 1,6-anhydrobond in the MurNAc residue.</text>
        <dbReference type="EC" id="4.2.2.n1"/>
    </reaction>
</comment>
<comment type="subcellular location">
    <subcellularLocation>
        <location evidence="1">Cell outer membrane</location>
        <topology evidence="1">Lipid-anchor</topology>
    </subcellularLocation>
</comment>
<comment type="similarity">
    <text evidence="1">Belongs to the transglycosylase Slt family.</text>
</comment>
<comment type="sequence caution" evidence="2">
    <conflict type="erroneous initiation">
        <sequence resource="EMBL-CDS" id="CAL13469"/>
    </conflict>
</comment>
<keyword id="KW-0998">Cell outer membrane</keyword>
<keyword id="KW-0961">Cell wall biogenesis/degradation</keyword>
<keyword id="KW-0449">Lipoprotein</keyword>
<keyword id="KW-0456">Lyase</keyword>
<keyword id="KW-0472">Membrane</keyword>
<keyword id="KW-0564">Palmitate</keyword>
<keyword id="KW-0732">Signal</keyword>
<evidence type="ECO:0000255" key="1">
    <source>
        <dbReference type="HAMAP-Rule" id="MF_01616"/>
    </source>
</evidence>
<evidence type="ECO:0000305" key="2"/>